<comment type="function">
    <text evidence="1">Produces ATP from ADP in the presence of a proton gradient across the membrane. The alpha chain is a regulatory subunit.</text>
</comment>
<comment type="catalytic activity">
    <reaction evidence="1">
        <text>ATP + H2O + 4 H(+)(in) = ADP + phosphate + 5 H(+)(out)</text>
        <dbReference type="Rhea" id="RHEA:57720"/>
        <dbReference type="ChEBI" id="CHEBI:15377"/>
        <dbReference type="ChEBI" id="CHEBI:15378"/>
        <dbReference type="ChEBI" id="CHEBI:30616"/>
        <dbReference type="ChEBI" id="CHEBI:43474"/>
        <dbReference type="ChEBI" id="CHEBI:456216"/>
        <dbReference type="EC" id="7.1.2.2"/>
    </reaction>
</comment>
<comment type="subunit">
    <text evidence="1">F-type ATPases have 2 components, CF(1) - the catalytic core - and CF(0) - the membrane proton channel. CF(1) has five subunits: alpha(3), beta(3), gamma(1), delta(1), epsilon(1). CF(0) has three main subunits: a(1), b(2) and c(9-12). The alpha and beta chains form an alternating ring which encloses part of the gamma chain. CF(1) is attached to CF(0) by a central stalk formed by the gamma and epsilon chains, while a peripheral stalk is formed by the delta and b chains.</text>
</comment>
<comment type="subcellular location">
    <subcellularLocation>
        <location evidence="1">Cell membrane</location>
        <topology evidence="1">Peripheral membrane protein</topology>
    </subcellularLocation>
</comment>
<comment type="similarity">
    <text evidence="1">Belongs to the ATPase alpha/beta chains family.</text>
</comment>
<organism>
    <name type="scientific">Shouchella clausii (strain KSM-K16)</name>
    <name type="common">Alkalihalobacillus clausii</name>
    <dbReference type="NCBI Taxonomy" id="66692"/>
    <lineage>
        <taxon>Bacteria</taxon>
        <taxon>Bacillati</taxon>
        <taxon>Bacillota</taxon>
        <taxon>Bacilli</taxon>
        <taxon>Bacillales</taxon>
        <taxon>Bacillaceae</taxon>
        <taxon>Shouchella</taxon>
    </lineage>
</organism>
<proteinExistence type="inferred from homology"/>
<accession>Q5WB76</accession>
<name>ATPA_SHOC1</name>
<dbReference type="EC" id="7.1.2.2" evidence="1"/>
<dbReference type="EMBL" id="AP006627">
    <property type="protein sequence ID" value="BAD66384.1"/>
    <property type="molecule type" value="Genomic_DNA"/>
</dbReference>
<dbReference type="RefSeq" id="WP_011248687.1">
    <property type="nucleotide sequence ID" value="NC_006582.1"/>
</dbReference>
<dbReference type="SMR" id="Q5WB76"/>
<dbReference type="STRING" id="66692.ABC3853"/>
<dbReference type="KEGG" id="bcl:ABC3853"/>
<dbReference type="eggNOG" id="COG0056">
    <property type="taxonomic scope" value="Bacteria"/>
</dbReference>
<dbReference type="HOGENOM" id="CLU_010091_2_1_9"/>
<dbReference type="OrthoDB" id="9803053at2"/>
<dbReference type="Proteomes" id="UP000001168">
    <property type="component" value="Chromosome"/>
</dbReference>
<dbReference type="GO" id="GO:0005886">
    <property type="term" value="C:plasma membrane"/>
    <property type="evidence" value="ECO:0007669"/>
    <property type="project" value="UniProtKB-SubCell"/>
</dbReference>
<dbReference type="GO" id="GO:0045259">
    <property type="term" value="C:proton-transporting ATP synthase complex"/>
    <property type="evidence" value="ECO:0007669"/>
    <property type="project" value="UniProtKB-KW"/>
</dbReference>
<dbReference type="GO" id="GO:0043531">
    <property type="term" value="F:ADP binding"/>
    <property type="evidence" value="ECO:0007669"/>
    <property type="project" value="TreeGrafter"/>
</dbReference>
<dbReference type="GO" id="GO:0005524">
    <property type="term" value="F:ATP binding"/>
    <property type="evidence" value="ECO:0007669"/>
    <property type="project" value="UniProtKB-UniRule"/>
</dbReference>
<dbReference type="GO" id="GO:0046933">
    <property type="term" value="F:proton-transporting ATP synthase activity, rotational mechanism"/>
    <property type="evidence" value="ECO:0007669"/>
    <property type="project" value="UniProtKB-UniRule"/>
</dbReference>
<dbReference type="CDD" id="cd18113">
    <property type="entry name" value="ATP-synt_F1_alpha_C"/>
    <property type="match status" value="1"/>
</dbReference>
<dbReference type="CDD" id="cd18116">
    <property type="entry name" value="ATP-synt_F1_alpha_N"/>
    <property type="match status" value="1"/>
</dbReference>
<dbReference type="CDD" id="cd01132">
    <property type="entry name" value="F1-ATPase_alpha_CD"/>
    <property type="match status" value="1"/>
</dbReference>
<dbReference type="FunFam" id="1.20.150.20:FF:000001">
    <property type="entry name" value="ATP synthase subunit alpha"/>
    <property type="match status" value="1"/>
</dbReference>
<dbReference type="FunFam" id="2.40.30.20:FF:000001">
    <property type="entry name" value="ATP synthase subunit alpha"/>
    <property type="match status" value="1"/>
</dbReference>
<dbReference type="FunFam" id="3.40.50.300:FF:000002">
    <property type="entry name" value="ATP synthase subunit alpha"/>
    <property type="match status" value="1"/>
</dbReference>
<dbReference type="Gene3D" id="2.40.30.20">
    <property type="match status" value="1"/>
</dbReference>
<dbReference type="Gene3D" id="1.20.150.20">
    <property type="entry name" value="ATP synthase alpha/beta chain, C-terminal domain"/>
    <property type="match status" value="1"/>
</dbReference>
<dbReference type="Gene3D" id="3.40.50.300">
    <property type="entry name" value="P-loop containing nucleotide triphosphate hydrolases"/>
    <property type="match status" value="1"/>
</dbReference>
<dbReference type="HAMAP" id="MF_01346">
    <property type="entry name" value="ATP_synth_alpha_bact"/>
    <property type="match status" value="1"/>
</dbReference>
<dbReference type="InterPro" id="IPR023366">
    <property type="entry name" value="ATP_synth_asu-like_sf"/>
</dbReference>
<dbReference type="InterPro" id="IPR000793">
    <property type="entry name" value="ATP_synth_asu_C"/>
</dbReference>
<dbReference type="InterPro" id="IPR038376">
    <property type="entry name" value="ATP_synth_asu_C_sf"/>
</dbReference>
<dbReference type="InterPro" id="IPR033732">
    <property type="entry name" value="ATP_synth_F1_a_nt-bd_dom"/>
</dbReference>
<dbReference type="InterPro" id="IPR005294">
    <property type="entry name" value="ATP_synth_F1_asu"/>
</dbReference>
<dbReference type="InterPro" id="IPR020003">
    <property type="entry name" value="ATPase_a/bsu_AS"/>
</dbReference>
<dbReference type="InterPro" id="IPR004100">
    <property type="entry name" value="ATPase_F1/V1/A1_a/bsu_N"/>
</dbReference>
<dbReference type="InterPro" id="IPR036121">
    <property type="entry name" value="ATPase_F1/V1/A1_a/bsu_N_sf"/>
</dbReference>
<dbReference type="InterPro" id="IPR000194">
    <property type="entry name" value="ATPase_F1/V1/A1_a/bsu_nucl-bd"/>
</dbReference>
<dbReference type="InterPro" id="IPR027417">
    <property type="entry name" value="P-loop_NTPase"/>
</dbReference>
<dbReference type="NCBIfam" id="TIGR00962">
    <property type="entry name" value="atpA"/>
    <property type="match status" value="1"/>
</dbReference>
<dbReference type="NCBIfam" id="NF009884">
    <property type="entry name" value="PRK13343.1"/>
    <property type="match status" value="1"/>
</dbReference>
<dbReference type="PANTHER" id="PTHR48082">
    <property type="entry name" value="ATP SYNTHASE SUBUNIT ALPHA, MITOCHONDRIAL"/>
    <property type="match status" value="1"/>
</dbReference>
<dbReference type="PANTHER" id="PTHR48082:SF2">
    <property type="entry name" value="ATP SYNTHASE SUBUNIT ALPHA, MITOCHONDRIAL"/>
    <property type="match status" value="1"/>
</dbReference>
<dbReference type="Pfam" id="PF00006">
    <property type="entry name" value="ATP-synt_ab"/>
    <property type="match status" value="1"/>
</dbReference>
<dbReference type="Pfam" id="PF00306">
    <property type="entry name" value="ATP-synt_ab_C"/>
    <property type="match status" value="1"/>
</dbReference>
<dbReference type="Pfam" id="PF02874">
    <property type="entry name" value="ATP-synt_ab_N"/>
    <property type="match status" value="1"/>
</dbReference>
<dbReference type="PIRSF" id="PIRSF039088">
    <property type="entry name" value="F_ATPase_subunit_alpha"/>
    <property type="match status" value="1"/>
</dbReference>
<dbReference type="SUPFAM" id="SSF47917">
    <property type="entry name" value="C-terminal domain of alpha and beta subunits of F1 ATP synthase"/>
    <property type="match status" value="1"/>
</dbReference>
<dbReference type="SUPFAM" id="SSF50615">
    <property type="entry name" value="N-terminal domain of alpha and beta subunits of F1 ATP synthase"/>
    <property type="match status" value="1"/>
</dbReference>
<dbReference type="SUPFAM" id="SSF52540">
    <property type="entry name" value="P-loop containing nucleoside triphosphate hydrolases"/>
    <property type="match status" value="1"/>
</dbReference>
<dbReference type="PROSITE" id="PS00152">
    <property type="entry name" value="ATPASE_ALPHA_BETA"/>
    <property type="match status" value="1"/>
</dbReference>
<feature type="chain" id="PRO_0000238196" description="ATP synthase subunit alpha">
    <location>
        <begin position="1"/>
        <end position="504"/>
    </location>
</feature>
<feature type="binding site" evidence="1">
    <location>
        <begin position="170"/>
        <end position="177"/>
    </location>
    <ligand>
        <name>ATP</name>
        <dbReference type="ChEBI" id="CHEBI:30616"/>
    </ligand>
</feature>
<feature type="site" description="Required for activity" evidence="1">
    <location>
        <position position="363"/>
    </location>
</feature>
<reference key="1">
    <citation type="submission" date="2003-10" db="EMBL/GenBank/DDBJ databases">
        <title>The complete genome sequence of the alkaliphilic Bacillus clausii KSM-K16.</title>
        <authorList>
            <person name="Takaki Y."/>
            <person name="Kageyama Y."/>
            <person name="Shimamura S."/>
            <person name="Suzuki H."/>
            <person name="Nishi S."/>
            <person name="Hatada Y."/>
            <person name="Kawai S."/>
            <person name="Ito S."/>
            <person name="Horikoshi K."/>
        </authorList>
    </citation>
    <scope>NUCLEOTIDE SEQUENCE [LARGE SCALE GENOMIC DNA]</scope>
    <source>
        <strain>KSM-K16</strain>
    </source>
</reference>
<gene>
    <name evidence="1" type="primary">atpA</name>
    <name type="ordered locus">ABC3853</name>
</gene>
<keyword id="KW-0066">ATP synthesis</keyword>
<keyword id="KW-0067">ATP-binding</keyword>
<keyword id="KW-1003">Cell membrane</keyword>
<keyword id="KW-0139">CF(1)</keyword>
<keyword id="KW-0375">Hydrogen ion transport</keyword>
<keyword id="KW-0406">Ion transport</keyword>
<keyword id="KW-0472">Membrane</keyword>
<keyword id="KW-0547">Nucleotide-binding</keyword>
<keyword id="KW-1185">Reference proteome</keyword>
<keyword id="KW-1278">Translocase</keyword>
<keyword id="KW-0813">Transport</keyword>
<evidence type="ECO:0000255" key="1">
    <source>
        <dbReference type="HAMAP-Rule" id="MF_01346"/>
    </source>
</evidence>
<protein>
    <recommendedName>
        <fullName evidence="1">ATP synthase subunit alpha</fullName>
        <ecNumber evidence="1">7.1.2.2</ecNumber>
    </recommendedName>
    <alternativeName>
        <fullName evidence="1">ATP synthase F1 sector subunit alpha</fullName>
    </alternativeName>
    <alternativeName>
        <fullName evidence="1">F-ATPase subunit alpha</fullName>
    </alternativeName>
</protein>
<sequence>MASIKATEISSLIKQQIDQFETTVNVQDVGTVIRVGDGIAFAHGLDNVMAGELLEFSTGVMGMAQNLEEDSVGIIILGPYTDIREGDEVKRTGRIMEVPVGSELLGRVVNPLGQPLDGLGPVHTSKTRPIESPAPGVMARKSVHEPLQTGIKSIDSMIPIGRGQRELIIGDRQTGKTAIAIDTIINQKDQDMICVYVAIGQKESTVSGVVETLRQRGALEYTIVVSASASDPAPLLFLAPYTGVSMAEEFMYNGKHVLVIYDDLSKQAAAYREMSLLLRRPPGREAFPGDVFYLHSRLLERAAKLNDDLGGGSITALPFIETQAGDVSAYIPTNVISITDGQVFLQSDLFHSGVRPAVNPGISVSRVGGSAQIKAMKKVAGTLRLDLAAYRELEAFAQFGSDLDAATQARLNRGERTVELLKQDLHQPLPVEKQVAIIYALTKGYLDDVPVADCRRFESELFTYLESNNNELLEHIRTTGNLPEESDLKAAIEAFKKGFVASNE</sequence>